<gene>
    <name type="primary">msantd3</name>
</gene>
<evidence type="ECO:0000255" key="1"/>
<evidence type="ECO:0000305" key="2"/>
<organism>
    <name type="scientific">Xenopus laevis</name>
    <name type="common">African clawed frog</name>
    <dbReference type="NCBI Taxonomy" id="8355"/>
    <lineage>
        <taxon>Eukaryota</taxon>
        <taxon>Metazoa</taxon>
        <taxon>Chordata</taxon>
        <taxon>Craniata</taxon>
        <taxon>Vertebrata</taxon>
        <taxon>Euteleostomi</taxon>
        <taxon>Amphibia</taxon>
        <taxon>Batrachia</taxon>
        <taxon>Anura</taxon>
        <taxon>Pipoidea</taxon>
        <taxon>Pipidae</taxon>
        <taxon>Xenopodinae</taxon>
        <taxon>Xenopus</taxon>
        <taxon>Xenopus</taxon>
    </lineage>
</organism>
<name>MSD3_XENLA</name>
<reference key="1">
    <citation type="submission" date="2003-01" db="EMBL/GenBank/DDBJ databases">
        <authorList>
            <consortium name="NIH - Xenopus Gene Collection (XGC) project"/>
        </authorList>
    </citation>
    <scope>NUCLEOTIDE SEQUENCE [LARGE SCALE MRNA]</scope>
    <source>
        <tissue>Embryo</tissue>
    </source>
</reference>
<comment type="similarity">
    <text evidence="2">Belongs to the MSANTD3 family.</text>
</comment>
<accession>Q7ZYM8</accession>
<protein>
    <recommendedName>
        <fullName>Myb/SANT-like DNA-binding domain-containing protein 3</fullName>
    </recommendedName>
</protein>
<feature type="chain" id="PRO_0000292592" description="Myb/SANT-like DNA-binding domain-containing protein 3">
    <location>
        <begin position="1"/>
        <end position="365"/>
    </location>
</feature>
<feature type="domain" description="Myb-like">
    <location>
        <begin position="13"/>
        <end position="78"/>
    </location>
</feature>
<feature type="coiled-coil region" evidence="1">
    <location>
        <begin position="301"/>
        <end position="337"/>
    </location>
</feature>
<keyword id="KW-0175">Coiled coil</keyword>
<keyword id="KW-1185">Reference proteome</keyword>
<sequence>MQNNEVLKPAKYFSELEKSVLLALVEKYKYVLECKKSDARTIALKQRTWQALAHEYNSQPSVSLRDFKQLKKCWENIKARTKKIMAHERREKGKLFGPESNSHQALKEKVASMLPEQLYFVQNQPEEERGYNHDTSNQEMDCKRVNLLDLEVLIDEQGKIQTKPFRKVPETNLLCDDGSPPQSIDKAFSNGDLELLIDEQGKIQAEPIRKVPVTDSQCIQGSPSSSLKTESFVVPERDVYEDQNSIANMHSSESSVHSTPIFPSSKLSANRTYGRKPSQNGIFTKMHEEQHHQQMSILQLQLIQMNEVHVAKVQQIERECEMAEEEHRIKMEILNKKKMYWERKLQTITKEWPVASFNRPFPNSP</sequence>
<proteinExistence type="evidence at transcript level"/>
<dbReference type="EMBL" id="BC043625">
    <property type="protein sequence ID" value="AAH43625.1"/>
    <property type="molecule type" value="mRNA"/>
</dbReference>
<dbReference type="RefSeq" id="NP_001080233.1">
    <property type="nucleotide sequence ID" value="NM_001086764.1"/>
</dbReference>
<dbReference type="RefSeq" id="XP_018121752.1">
    <property type="nucleotide sequence ID" value="XM_018266263.1"/>
</dbReference>
<dbReference type="SMR" id="Q7ZYM8"/>
<dbReference type="DNASU" id="379925"/>
<dbReference type="GeneID" id="379925"/>
<dbReference type="KEGG" id="xla:379925"/>
<dbReference type="AGR" id="Xenbase:XB-GENE-5737853"/>
<dbReference type="CTD" id="379925"/>
<dbReference type="Xenbase" id="XB-GENE-5737853">
    <property type="gene designation" value="msantd3.L"/>
</dbReference>
<dbReference type="OrthoDB" id="3066195at2759"/>
<dbReference type="Proteomes" id="UP000186698">
    <property type="component" value="Chromosome 6L"/>
</dbReference>
<dbReference type="Bgee" id="379925">
    <property type="expression patterns" value="Expressed in oocyte and 19 other cell types or tissues"/>
</dbReference>
<dbReference type="InterPro" id="IPR028002">
    <property type="entry name" value="Myb_DNA-bind_5"/>
</dbReference>
<dbReference type="PANTHER" id="PTHR21632:SF2">
    <property type="entry name" value="MYB_SANT-LIKE DNA-BINDING DOMAIN-CONTAINING PROTEIN 3"/>
    <property type="match status" value="1"/>
</dbReference>
<dbReference type="PANTHER" id="PTHR21632">
    <property type="entry name" value="REGULATORY PROTEIN ZESTE"/>
    <property type="match status" value="1"/>
</dbReference>
<dbReference type="Pfam" id="PF13873">
    <property type="entry name" value="Myb_DNA-bind_5"/>
    <property type="match status" value="1"/>
</dbReference>